<comment type="function">
    <text evidence="2">Inhibits SNARE complex formation by absorbing free STX1A.</text>
</comment>
<comment type="subunit">
    <text evidence="1 2">Binds to STX1A (By similarity). Interacts with DNM1; this interaction inhibits the binding of DNM1 to AMPH and DNM1-receptor-mediated endocytosis (By similarity).</text>
</comment>
<comment type="subcellular location">
    <subcellularLocation>
        <location evidence="8">Membrane</location>
        <topology evidence="8">Single-pass membrane protein</topology>
    </subcellularLocation>
    <subcellularLocation>
        <location>Synapse</location>
        <location>Synaptosome</location>
    </subcellularLocation>
</comment>
<comment type="alternative products">
    <event type="alternative splicing"/>
    <isoform>
        <id>Q80U23-1</id>
        <name>1</name>
        <sequence type="displayed"/>
    </isoform>
    <isoform>
        <id>Q80U23-2</id>
        <name>2</name>
        <sequence type="described" ref="VSP_037439"/>
    </isoform>
    <isoform>
        <id>Q80U23-3</id>
        <name>3</name>
        <sequence type="described" ref="VSP_037440"/>
    </isoform>
</comment>
<comment type="sequence caution" evidence="8">
    <conflict type="erroneous initiation">
        <sequence resource="EMBL-CDS" id="AAH72567"/>
    </conflict>
    <text>Extended N-terminus.</text>
</comment>
<comment type="sequence caution" evidence="8">
    <conflict type="erroneous initiation">
        <sequence resource="EMBL-CDS" id="AAH96541"/>
    </conflict>
    <text>Extended N-terminus.</text>
</comment>
<comment type="sequence caution" evidence="8">
    <conflict type="erroneous initiation">
        <sequence resource="EMBL-CDS" id="AAI39793"/>
    </conflict>
    <text>Extended N-terminus.</text>
</comment>
<comment type="sequence caution" evidence="8">
    <conflict type="erroneous initiation">
        <sequence resource="EMBL-CDS" id="BAC33090"/>
    </conflict>
    <text>Extended N-terminus.</text>
</comment>
<comment type="sequence caution" evidence="8">
    <conflict type="erroneous initiation">
        <sequence resource="EMBL-CDS" id="BAC65544"/>
    </conflict>
    <text>Extended N-terminus.</text>
</comment>
<dbReference type="EMBL" id="AK122262">
    <property type="protein sequence ID" value="BAC65544.1"/>
    <property type="status" value="ALT_INIT"/>
    <property type="molecule type" value="mRNA"/>
</dbReference>
<dbReference type="EMBL" id="AK047568">
    <property type="protein sequence ID" value="BAC33090.1"/>
    <property type="status" value="ALT_INIT"/>
    <property type="molecule type" value="mRNA"/>
</dbReference>
<dbReference type="EMBL" id="AL928719">
    <property type="status" value="NOT_ANNOTATED_CDS"/>
    <property type="molecule type" value="Genomic_DNA"/>
</dbReference>
<dbReference type="EMBL" id="BC072567">
    <property type="protein sequence ID" value="AAH72567.1"/>
    <property type="status" value="ALT_INIT"/>
    <property type="molecule type" value="mRNA"/>
</dbReference>
<dbReference type="EMBL" id="BC096541">
    <property type="protein sequence ID" value="AAH96541.1"/>
    <property type="status" value="ALT_INIT"/>
    <property type="molecule type" value="mRNA"/>
</dbReference>
<dbReference type="EMBL" id="BC117896">
    <property type="protein sequence ID" value="AAI17897.1"/>
    <property type="molecule type" value="mRNA"/>
</dbReference>
<dbReference type="EMBL" id="BC117897">
    <property type="protein sequence ID" value="AAI17898.1"/>
    <property type="molecule type" value="mRNA"/>
</dbReference>
<dbReference type="EMBL" id="BC139792">
    <property type="protein sequence ID" value="AAI39793.1"/>
    <property type="status" value="ALT_INIT"/>
    <property type="molecule type" value="mRNA"/>
</dbReference>
<dbReference type="CCDS" id="CCDS16871.1">
    <molecule id="Q80U23-2"/>
</dbReference>
<dbReference type="CCDS" id="CCDS71161.1">
    <molecule id="Q80U23-3"/>
</dbReference>
<dbReference type="CCDS" id="CCDS71162.1">
    <molecule id="Q80U23-1"/>
</dbReference>
<dbReference type="RefSeq" id="NP_001278005.1">
    <molecule id="Q80U23-1"/>
    <property type="nucleotide sequence ID" value="NM_001291076.1"/>
</dbReference>
<dbReference type="RefSeq" id="NP_001278006.1">
    <molecule id="Q80U23-3"/>
    <property type="nucleotide sequence ID" value="NM_001291077.1"/>
</dbReference>
<dbReference type="RefSeq" id="NP_937857.1">
    <molecule id="Q80U23-2"/>
    <property type="nucleotide sequence ID" value="NM_198214.3"/>
</dbReference>
<dbReference type="RefSeq" id="XP_011237840.1">
    <molecule id="Q80U23-2"/>
    <property type="nucleotide sequence ID" value="XM_011239538.2"/>
</dbReference>
<dbReference type="RefSeq" id="XP_030107032.1">
    <molecule id="Q80U23-1"/>
    <property type="nucleotide sequence ID" value="XM_030251172.2"/>
</dbReference>
<dbReference type="BioGRID" id="232344">
    <property type="interactions" value="2"/>
</dbReference>
<dbReference type="FunCoup" id="Q80U23">
    <property type="interactions" value="390"/>
</dbReference>
<dbReference type="IntAct" id="Q80U23">
    <property type="interactions" value="2"/>
</dbReference>
<dbReference type="MINT" id="Q80U23"/>
<dbReference type="STRING" id="10090.ENSMUSP00000105501"/>
<dbReference type="GlyGen" id="Q80U23">
    <property type="glycosylation" value="1 site, 1 N-linked glycan (1 site)"/>
</dbReference>
<dbReference type="iPTMnet" id="Q80U23"/>
<dbReference type="PhosphoSitePlus" id="Q80U23"/>
<dbReference type="SwissPalm" id="Q80U23"/>
<dbReference type="PaxDb" id="10090-ENSMUSP00000028951"/>
<dbReference type="PeptideAtlas" id="Q80U23"/>
<dbReference type="ProteomicsDB" id="261293">
    <molecule id="Q80U23-1"/>
</dbReference>
<dbReference type="ProteomicsDB" id="261294">
    <molecule id="Q80U23-2"/>
</dbReference>
<dbReference type="ProteomicsDB" id="261295">
    <molecule id="Q80U23-3"/>
</dbReference>
<dbReference type="Antibodypedia" id="34949">
    <property type="antibodies" value="170 antibodies from 32 providers"/>
</dbReference>
<dbReference type="DNASU" id="241727"/>
<dbReference type="Ensembl" id="ENSMUST00000028951.14">
    <molecule id="Q80U23-2"/>
    <property type="protein sequence ID" value="ENSMUSP00000028951.8"/>
    <property type="gene ID" value="ENSMUSG00000027457.16"/>
</dbReference>
<dbReference type="Ensembl" id="ENSMUST00000094456.10">
    <molecule id="Q80U23-1"/>
    <property type="protein sequence ID" value="ENSMUSP00000092026.4"/>
    <property type="gene ID" value="ENSMUSG00000027457.16"/>
</dbReference>
<dbReference type="Ensembl" id="ENSMUST00000109875.8">
    <molecule id="Q80U23-2"/>
    <property type="protein sequence ID" value="ENSMUSP00000105501.2"/>
    <property type="gene ID" value="ENSMUSG00000027457.16"/>
</dbReference>
<dbReference type="Ensembl" id="ENSMUST00000109877.10">
    <molecule id="Q80U23-3"/>
    <property type="protein sequence ID" value="ENSMUSP00000105503.4"/>
    <property type="gene ID" value="ENSMUSG00000027457.16"/>
</dbReference>
<dbReference type="GeneID" id="241727"/>
<dbReference type="KEGG" id="mmu:241727"/>
<dbReference type="UCSC" id="uc008ned.2">
    <molecule id="Q80U23-2"/>
    <property type="organism name" value="mouse"/>
</dbReference>
<dbReference type="UCSC" id="uc008nee.2">
    <molecule id="Q80U23-1"/>
    <property type="organism name" value="mouse"/>
</dbReference>
<dbReference type="UCSC" id="uc008nef.2">
    <molecule id="Q80U23-3"/>
    <property type="organism name" value="mouse"/>
</dbReference>
<dbReference type="AGR" id="MGI:2139270"/>
<dbReference type="CTD" id="9751"/>
<dbReference type="MGI" id="MGI:2139270">
    <property type="gene designation" value="Snph"/>
</dbReference>
<dbReference type="VEuPathDB" id="HostDB:ENSMUSG00000027457"/>
<dbReference type="eggNOG" id="ENOG502QUYH">
    <property type="taxonomic scope" value="Eukaryota"/>
</dbReference>
<dbReference type="GeneTree" id="ENSGT00520000055634"/>
<dbReference type="HOGENOM" id="CLU_019458_1_0_1"/>
<dbReference type="InParanoid" id="Q80U23"/>
<dbReference type="OMA" id="DFAQYQP"/>
<dbReference type="PhylomeDB" id="Q80U23"/>
<dbReference type="TreeFam" id="TF332407"/>
<dbReference type="BioGRID-ORCS" id="241727">
    <property type="hits" value="2 hits in 77 CRISPR screens"/>
</dbReference>
<dbReference type="CD-CODE" id="CE726F99">
    <property type="entry name" value="Postsynaptic density"/>
</dbReference>
<dbReference type="PRO" id="PR:Q80U23"/>
<dbReference type="Proteomes" id="UP000000589">
    <property type="component" value="Chromosome 2"/>
</dbReference>
<dbReference type="RNAct" id="Q80U23">
    <property type="molecule type" value="protein"/>
</dbReference>
<dbReference type="Bgee" id="ENSMUSG00000027457">
    <property type="expression patterns" value="Expressed in visual cortex and 104 other cell types or tissues"/>
</dbReference>
<dbReference type="ExpressionAtlas" id="Q80U23">
    <property type="expression patterns" value="baseline and differential"/>
</dbReference>
<dbReference type="GO" id="GO:0005881">
    <property type="term" value="C:cytoplasmic microtubule"/>
    <property type="evidence" value="ECO:0000250"/>
    <property type="project" value="UniProtKB"/>
</dbReference>
<dbReference type="GO" id="GO:0016020">
    <property type="term" value="C:membrane"/>
    <property type="evidence" value="ECO:0007669"/>
    <property type="project" value="UniProtKB-SubCell"/>
</dbReference>
<dbReference type="GO" id="GO:0005739">
    <property type="term" value="C:mitochondrion"/>
    <property type="evidence" value="ECO:0007005"/>
    <property type="project" value="MGI"/>
</dbReference>
<dbReference type="GO" id="GO:0043005">
    <property type="term" value="C:neuron projection"/>
    <property type="evidence" value="ECO:0007669"/>
    <property type="project" value="UniProtKB-KW"/>
</dbReference>
<dbReference type="GO" id="GO:0045202">
    <property type="term" value="C:synapse"/>
    <property type="evidence" value="ECO:0007669"/>
    <property type="project" value="UniProtKB-SubCell"/>
</dbReference>
<dbReference type="GO" id="GO:0045806">
    <property type="term" value="P:negative regulation of endocytosis"/>
    <property type="evidence" value="ECO:0000266"/>
    <property type="project" value="MGI"/>
</dbReference>
<dbReference type="GO" id="GO:0006906">
    <property type="term" value="P:vesicle fusion"/>
    <property type="evidence" value="ECO:0000266"/>
    <property type="project" value="MGI"/>
</dbReference>
<dbReference type="InterPro" id="IPR028197">
    <property type="entry name" value="Syntaphilin/Syntabulin"/>
</dbReference>
<dbReference type="PANTHER" id="PTHR16208">
    <property type="entry name" value="MICROTUBULE-ASSOCIATED PROTEIN/SYNTAPHILIN"/>
    <property type="match status" value="1"/>
</dbReference>
<dbReference type="PANTHER" id="PTHR16208:SF1">
    <property type="entry name" value="SYNTAPHILIN"/>
    <property type="match status" value="1"/>
</dbReference>
<dbReference type="Pfam" id="PF15290">
    <property type="entry name" value="Syntaphilin"/>
    <property type="match status" value="1"/>
</dbReference>
<gene>
    <name evidence="9" type="primary">Snph</name>
    <name type="synonym">Kiaa0374</name>
</gene>
<evidence type="ECO:0000250" key="1">
    <source>
        <dbReference type="UniProtKB" id="B5DF41"/>
    </source>
</evidence>
<evidence type="ECO:0000250" key="2">
    <source>
        <dbReference type="UniProtKB" id="O15079"/>
    </source>
</evidence>
<evidence type="ECO:0000255" key="3"/>
<evidence type="ECO:0000256" key="4">
    <source>
        <dbReference type="SAM" id="MobiDB-lite"/>
    </source>
</evidence>
<evidence type="ECO:0000303" key="5">
    <source>
    </source>
</evidence>
<evidence type="ECO:0000303" key="6">
    <source>
    </source>
</evidence>
<evidence type="ECO:0000303" key="7">
    <source>
    </source>
</evidence>
<evidence type="ECO:0000305" key="8"/>
<evidence type="ECO:0000312" key="9">
    <source>
        <dbReference type="MGI" id="MGI:2139270"/>
    </source>
</evidence>
<evidence type="ECO:0007744" key="10">
    <source>
    </source>
</evidence>
<sequence>MAMSLQGSRRASAGSRRRTSPPVSVRDAYGTSSLSSSSNSGSCKGSDSSPTPRRSMKYTLCSDNHGIKPPTPEQYLTPLQQKEVCIRHLKARLKDTQDRLQDRDTEIDDLKTQLSRMQEDWIEEECHRVEAQLALKEARKEIRQLKQVIDTVKNNLIDKDKGLQKYFVDINIQNKKLETLLHSMEVAQNGVAKEEGTGESAGGSPARSLTRSSTYTKLSDPAVCGDRQPGDPSNTSAEDGADSGYVAADDTLSRTDALEASSLLSSGVDCGLEEASLHSSFNLGPRFPASNTYEKLLCGMEAGVQVSCMQERAIQTDFVQYQPDLNTILEKVGQAQVCGSVLKDRHSELDPHPSGPRDPDSAVVVTVGDELEAPEPITCGPATHRPAVNSNPGLPVSVVCPVEEEEEEAAAATTTEKEPKSYWSRHYIVDLLAVVVPAVPTVAWLCRSQRRQGQPIYNISSLLRGCCTVALHSIRRISCRSLGQPSSSTAGGSQL</sequence>
<feature type="chain" id="PRO_0000284137" description="Syntaphilin">
    <location>
        <begin position="1"/>
        <end position="495"/>
    </location>
</feature>
<feature type="transmembrane region" description="Helical" evidence="3">
    <location>
        <begin position="427"/>
        <end position="446"/>
    </location>
</feature>
<feature type="region of interest" description="Disordered" evidence="4">
    <location>
        <begin position="1"/>
        <end position="74"/>
    </location>
</feature>
<feature type="region of interest" description="Disordered" evidence="4">
    <location>
        <begin position="191"/>
        <end position="244"/>
    </location>
</feature>
<feature type="coiled-coil region" evidence="3">
    <location>
        <begin position="79"/>
        <end position="161"/>
    </location>
</feature>
<feature type="compositionally biased region" description="Low complexity" evidence="4">
    <location>
        <begin position="7"/>
        <end position="49"/>
    </location>
</feature>
<feature type="compositionally biased region" description="Polar residues" evidence="4">
    <location>
        <begin position="207"/>
        <end position="217"/>
    </location>
</feature>
<feature type="modified residue" description="Phosphoserine" evidence="10">
    <location>
        <position position="200"/>
    </location>
</feature>
<feature type="modified residue" description="Phosphoserine" evidence="10">
    <location>
        <position position="204"/>
    </location>
</feature>
<feature type="modified residue" description="Phosphothreonine" evidence="10">
    <location>
        <position position="214"/>
    </location>
</feature>
<feature type="modified residue" description="Phosphoserine" evidence="10">
    <location>
        <position position="219"/>
    </location>
</feature>
<feature type="modified residue" description="Phosphothreonine" evidence="1">
    <location>
        <position position="235"/>
    </location>
</feature>
<feature type="splice variant" id="VSP_037439" description="In isoform 2." evidence="5 6 7">
    <original>R</original>
    <variation>RSGGTLGRSGLAVFAQCPQVPASQNEQRPLLPAS</variation>
    <location>
        <position position="16"/>
    </location>
</feature>
<feature type="splice variant" id="VSP_037440" description="In isoform 3." evidence="6">
    <location>
        <begin position="17"/>
        <end position="52"/>
    </location>
</feature>
<feature type="sequence conflict" description="In Ref. 2; BAC33090." evidence="8" ref="2">
    <original>L</original>
    <variation>V</variation>
    <location>
        <position position="156"/>
    </location>
</feature>
<feature type="sequence conflict" description="In Ref. 4; AAH96541." evidence="8" ref="4">
    <original>K</original>
    <variation>M</variation>
    <location>
        <position position="165"/>
    </location>
</feature>
<feature type="sequence conflict" description="In Ref. 2; BAC33090." evidence="8" ref="2">
    <original>D</original>
    <variation>Y</variation>
    <location>
        <position position="358"/>
    </location>
</feature>
<feature type="sequence conflict" description="In Ref. 4; AAI17897." evidence="8" ref="4">
    <original>I</original>
    <variation>V</variation>
    <location>
        <position position="456"/>
    </location>
</feature>
<keyword id="KW-0025">Alternative splicing</keyword>
<keyword id="KW-0175">Coiled coil</keyword>
<keyword id="KW-0472">Membrane</keyword>
<keyword id="KW-0597">Phosphoprotein</keyword>
<keyword id="KW-1185">Reference proteome</keyword>
<keyword id="KW-0770">Synapse</keyword>
<keyword id="KW-0771">Synaptosome</keyword>
<keyword id="KW-0812">Transmembrane</keyword>
<keyword id="KW-1133">Transmembrane helix</keyword>
<name>SNPH_MOUSE</name>
<organism>
    <name type="scientific">Mus musculus</name>
    <name type="common">Mouse</name>
    <dbReference type="NCBI Taxonomy" id="10090"/>
    <lineage>
        <taxon>Eukaryota</taxon>
        <taxon>Metazoa</taxon>
        <taxon>Chordata</taxon>
        <taxon>Craniata</taxon>
        <taxon>Vertebrata</taxon>
        <taxon>Euteleostomi</taxon>
        <taxon>Mammalia</taxon>
        <taxon>Eutheria</taxon>
        <taxon>Euarchontoglires</taxon>
        <taxon>Glires</taxon>
        <taxon>Rodentia</taxon>
        <taxon>Myomorpha</taxon>
        <taxon>Muroidea</taxon>
        <taxon>Muridae</taxon>
        <taxon>Murinae</taxon>
        <taxon>Mus</taxon>
        <taxon>Mus</taxon>
    </lineage>
</organism>
<proteinExistence type="evidence at protein level"/>
<reference key="1">
    <citation type="journal article" date="2003" name="DNA Res.">
        <title>Prediction of the coding sequences of mouse homologues of KIAA gene: II. The complete nucleotide sequences of 400 mouse KIAA-homologous cDNAs identified by screening of terminal sequences of cDNA clones randomly sampled from size-fractionated libraries.</title>
        <authorList>
            <person name="Okazaki N."/>
            <person name="Kikuno R."/>
            <person name="Ohara R."/>
            <person name="Inamoto S."/>
            <person name="Aizawa H."/>
            <person name="Yuasa S."/>
            <person name="Nakajima D."/>
            <person name="Nagase T."/>
            <person name="Ohara O."/>
            <person name="Koga H."/>
        </authorList>
    </citation>
    <scope>NUCLEOTIDE SEQUENCE [LARGE SCALE MRNA] (ISOFORM 2)</scope>
    <source>
        <tissue>Brain</tissue>
    </source>
</reference>
<reference key="2">
    <citation type="journal article" date="2005" name="Science">
        <title>The transcriptional landscape of the mammalian genome.</title>
        <authorList>
            <person name="Carninci P."/>
            <person name="Kasukawa T."/>
            <person name="Katayama S."/>
            <person name="Gough J."/>
            <person name="Frith M.C."/>
            <person name="Maeda N."/>
            <person name="Oyama R."/>
            <person name="Ravasi T."/>
            <person name="Lenhard B."/>
            <person name="Wells C."/>
            <person name="Kodzius R."/>
            <person name="Shimokawa K."/>
            <person name="Bajic V.B."/>
            <person name="Brenner S.E."/>
            <person name="Batalov S."/>
            <person name="Forrest A.R."/>
            <person name="Zavolan M."/>
            <person name="Davis M.J."/>
            <person name="Wilming L.G."/>
            <person name="Aidinis V."/>
            <person name="Allen J.E."/>
            <person name="Ambesi-Impiombato A."/>
            <person name="Apweiler R."/>
            <person name="Aturaliya R.N."/>
            <person name="Bailey T.L."/>
            <person name="Bansal M."/>
            <person name="Baxter L."/>
            <person name="Beisel K.W."/>
            <person name="Bersano T."/>
            <person name="Bono H."/>
            <person name="Chalk A.M."/>
            <person name="Chiu K.P."/>
            <person name="Choudhary V."/>
            <person name="Christoffels A."/>
            <person name="Clutterbuck D.R."/>
            <person name="Crowe M.L."/>
            <person name="Dalla E."/>
            <person name="Dalrymple B.P."/>
            <person name="de Bono B."/>
            <person name="Della Gatta G."/>
            <person name="di Bernardo D."/>
            <person name="Down T."/>
            <person name="Engstrom P."/>
            <person name="Fagiolini M."/>
            <person name="Faulkner G."/>
            <person name="Fletcher C.F."/>
            <person name="Fukushima T."/>
            <person name="Furuno M."/>
            <person name="Futaki S."/>
            <person name="Gariboldi M."/>
            <person name="Georgii-Hemming P."/>
            <person name="Gingeras T.R."/>
            <person name="Gojobori T."/>
            <person name="Green R.E."/>
            <person name="Gustincich S."/>
            <person name="Harbers M."/>
            <person name="Hayashi Y."/>
            <person name="Hensch T.K."/>
            <person name="Hirokawa N."/>
            <person name="Hill D."/>
            <person name="Huminiecki L."/>
            <person name="Iacono M."/>
            <person name="Ikeo K."/>
            <person name="Iwama A."/>
            <person name="Ishikawa T."/>
            <person name="Jakt M."/>
            <person name="Kanapin A."/>
            <person name="Katoh M."/>
            <person name="Kawasawa Y."/>
            <person name="Kelso J."/>
            <person name="Kitamura H."/>
            <person name="Kitano H."/>
            <person name="Kollias G."/>
            <person name="Krishnan S.P."/>
            <person name="Kruger A."/>
            <person name="Kummerfeld S.K."/>
            <person name="Kurochkin I.V."/>
            <person name="Lareau L.F."/>
            <person name="Lazarevic D."/>
            <person name="Lipovich L."/>
            <person name="Liu J."/>
            <person name="Liuni S."/>
            <person name="McWilliam S."/>
            <person name="Madan Babu M."/>
            <person name="Madera M."/>
            <person name="Marchionni L."/>
            <person name="Matsuda H."/>
            <person name="Matsuzawa S."/>
            <person name="Miki H."/>
            <person name="Mignone F."/>
            <person name="Miyake S."/>
            <person name="Morris K."/>
            <person name="Mottagui-Tabar S."/>
            <person name="Mulder N."/>
            <person name="Nakano N."/>
            <person name="Nakauchi H."/>
            <person name="Ng P."/>
            <person name="Nilsson R."/>
            <person name="Nishiguchi S."/>
            <person name="Nishikawa S."/>
            <person name="Nori F."/>
            <person name="Ohara O."/>
            <person name="Okazaki Y."/>
            <person name="Orlando V."/>
            <person name="Pang K.C."/>
            <person name="Pavan W.J."/>
            <person name="Pavesi G."/>
            <person name="Pesole G."/>
            <person name="Petrovsky N."/>
            <person name="Piazza S."/>
            <person name="Reed J."/>
            <person name="Reid J.F."/>
            <person name="Ring B.Z."/>
            <person name="Ringwald M."/>
            <person name="Rost B."/>
            <person name="Ruan Y."/>
            <person name="Salzberg S.L."/>
            <person name="Sandelin A."/>
            <person name="Schneider C."/>
            <person name="Schoenbach C."/>
            <person name="Sekiguchi K."/>
            <person name="Semple C.A."/>
            <person name="Seno S."/>
            <person name="Sessa L."/>
            <person name="Sheng Y."/>
            <person name="Shibata Y."/>
            <person name="Shimada H."/>
            <person name="Shimada K."/>
            <person name="Silva D."/>
            <person name="Sinclair B."/>
            <person name="Sperling S."/>
            <person name="Stupka E."/>
            <person name="Sugiura K."/>
            <person name="Sultana R."/>
            <person name="Takenaka Y."/>
            <person name="Taki K."/>
            <person name="Tammoja K."/>
            <person name="Tan S.L."/>
            <person name="Tang S."/>
            <person name="Taylor M.S."/>
            <person name="Tegner J."/>
            <person name="Teichmann S.A."/>
            <person name="Ueda H.R."/>
            <person name="van Nimwegen E."/>
            <person name="Verardo R."/>
            <person name="Wei C.L."/>
            <person name="Yagi K."/>
            <person name="Yamanishi H."/>
            <person name="Zabarovsky E."/>
            <person name="Zhu S."/>
            <person name="Zimmer A."/>
            <person name="Hide W."/>
            <person name="Bult C."/>
            <person name="Grimmond S.M."/>
            <person name="Teasdale R.D."/>
            <person name="Liu E.T."/>
            <person name="Brusic V."/>
            <person name="Quackenbush J."/>
            <person name="Wahlestedt C."/>
            <person name="Mattick J.S."/>
            <person name="Hume D.A."/>
            <person name="Kai C."/>
            <person name="Sasaki D."/>
            <person name="Tomaru Y."/>
            <person name="Fukuda S."/>
            <person name="Kanamori-Katayama M."/>
            <person name="Suzuki M."/>
            <person name="Aoki J."/>
            <person name="Arakawa T."/>
            <person name="Iida J."/>
            <person name="Imamura K."/>
            <person name="Itoh M."/>
            <person name="Kato T."/>
            <person name="Kawaji H."/>
            <person name="Kawagashira N."/>
            <person name="Kawashima T."/>
            <person name="Kojima M."/>
            <person name="Kondo S."/>
            <person name="Konno H."/>
            <person name="Nakano K."/>
            <person name="Ninomiya N."/>
            <person name="Nishio T."/>
            <person name="Okada M."/>
            <person name="Plessy C."/>
            <person name="Shibata K."/>
            <person name="Shiraki T."/>
            <person name="Suzuki S."/>
            <person name="Tagami M."/>
            <person name="Waki K."/>
            <person name="Watahiki A."/>
            <person name="Okamura-Oho Y."/>
            <person name="Suzuki H."/>
            <person name="Kawai J."/>
            <person name="Hayashizaki Y."/>
        </authorList>
    </citation>
    <scope>NUCLEOTIDE SEQUENCE [LARGE SCALE MRNA] (ISOFORM 2)</scope>
    <source>
        <strain>C57BL/6J</strain>
        <tissue>Cerebellum</tissue>
    </source>
</reference>
<reference key="3">
    <citation type="journal article" date="2009" name="PLoS Biol.">
        <title>Lineage-specific biology revealed by a finished genome assembly of the mouse.</title>
        <authorList>
            <person name="Church D.M."/>
            <person name="Goodstadt L."/>
            <person name="Hillier L.W."/>
            <person name="Zody M.C."/>
            <person name="Goldstein S."/>
            <person name="She X."/>
            <person name="Bult C.J."/>
            <person name="Agarwala R."/>
            <person name="Cherry J.L."/>
            <person name="DiCuccio M."/>
            <person name="Hlavina W."/>
            <person name="Kapustin Y."/>
            <person name="Meric P."/>
            <person name="Maglott D."/>
            <person name="Birtle Z."/>
            <person name="Marques A.C."/>
            <person name="Graves T."/>
            <person name="Zhou S."/>
            <person name="Teague B."/>
            <person name="Potamousis K."/>
            <person name="Churas C."/>
            <person name="Place M."/>
            <person name="Herschleb J."/>
            <person name="Runnheim R."/>
            <person name="Forrest D."/>
            <person name="Amos-Landgraf J."/>
            <person name="Schwartz D.C."/>
            <person name="Cheng Z."/>
            <person name="Lindblad-Toh K."/>
            <person name="Eichler E.E."/>
            <person name="Ponting C.P."/>
        </authorList>
    </citation>
    <scope>NUCLEOTIDE SEQUENCE [LARGE SCALE GENOMIC DNA]</scope>
    <source>
        <strain>C57BL/6J</strain>
    </source>
</reference>
<reference key="4">
    <citation type="journal article" date="2004" name="Genome Res.">
        <title>The status, quality, and expansion of the NIH full-length cDNA project: the Mammalian Gene Collection (MGC).</title>
        <authorList>
            <consortium name="The MGC Project Team"/>
        </authorList>
    </citation>
    <scope>NUCLEOTIDE SEQUENCE [LARGE SCALE MRNA] (ISOFORMS 1; 2 AND 3)</scope>
    <source>
        <strain>C57BL/6J</strain>
        <tissue>Brain</tissue>
    </source>
</reference>
<reference key="5">
    <citation type="journal article" date="2010" name="Cell">
        <title>A tissue-specific atlas of mouse protein phosphorylation and expression.</title>
        <authorList>
            <person name="Huttlin E.L."/>
            <person name="Jedrychowski M.P."/>
            <person name="Elias J.E."/>
            <person name="Goswami T."/>
            <person name="Rad R."/>
            <person name="Beausoleil S.A."/>
            <person name="Villen J."/>
            <person name="Haas W."/>
            <person name="Sowa M.E."/>
            <person name="Gygi S.P."/>
        </authorList>
    </citation>
    <scope>PHOSPHORYLATION [LARGE SCALE ANALYSIS] AT SER-200; SER-204; THR-214 AND SER-219</scope>
    <scope>IDENTIFICATION BY MASS SPECTROMETRY [LARGE SCALE ANALYSIS]</scope>
    <source>
        <tissue>Brain</tissue>
    </source>
</reference>
<accession>Q80U23</accession>
<accession>A2AT08</accession>
<accession>A2AT09</accession>
<accession>A2AT10</accession>
<accession>A2AT11</accession>
<accession>A4FUV3</accession>
<accession>A4VCI7</accession>
<accession>Q4VA51</accession>
<accession>Q6GQX4</accession>
<accession>Q8C8B8</accession>
<protein>
    <recommendedName>
        <fullName evidence="2">Syntaphilin</fullName>
    </recommendedName>
</protein>